<dbReference type="EC" id="6.3.2.8" evidence="1"/>
<dbReference type="EMBL" id="CP001337">
    <property type="protein sequence ID" value="ACL25716.1"/>
    <property type="molecule type" value="Genomic_DNA"/>
</dbReference>
<dbReference type="RefSeq" id="WP_015941572.1">
    <property type="nucleotide sequence ID" value="NC_011831.1"/>
</dbReference>
<dbReference type="SMR" id="B8G5Y3"/>
<dbReference type="STRING" id="326427.Cagg_2854"/>
<dbReference type="KEGG" id="cag:Cagg_2854"/>
<dbReference type="eggNOG" id="COG0773">
    <property type="taxonomic scope" value="Bacteria"/>
</dbReference>
<dbReference type="HOGENOM" id="CLU_028104_2_0_0"/>
<dbReference type="OrthoDB" id="9804126at2"/>
<dbReference type="UniPathway" id="UPA00219"/>
<dbReference type="Proteomes" id="UP000002508">
    <property type="component" value="Chromosome"/>
</dbReference>
<dbReference type="GO" id="GO:0005737">
    <property type="term" value="C:cytoplasm"/>
    <property type="evidence" value="ECO:0007669"/>
    <property type="project" value="UniProtKB-SubCell"/>
</dbReference>
<dbReference type="GO" id="GO:0005524">
    <property type="term" value="F:ATP binding"/>
    <property type="evidence" value="ECO:0007669"/>
    <property type="project" value="UniProtKB-UniRule"/>
</dbReference>
<dbReference type="GO" id="GO:0008763">
    <property type="term" value="F:UDP-N-acetylmuramate-L-alanine ligase activity"/>
    <property type="evidence" value="ECO:0007669"/>
    <property type="project" value="UniProtKB-UniRule"/>
</dbReference>
<dbReference type="GO" id="GO:0051301">
    <property type="term" value="P:cell division"/>
    <property type="evidence" value="ECO:0007669"/>
    <property type="project" value="UniProtKB-KW"/>
</dbReference>
<dbReference type="GO" id="GO:0071555">
    <property type="term" value="P:cell wall organization"/>
    <property type="evidence" value="ECO:0007669"/>
    <property type="project" value="UniProtKB-KW"/>
</dbReference>
<dbReference type="GO" id="GO:0009252">
    <property type="term" value="P:peptidoglycan biosynthetic process"/>
    <property type="evidence" value="ECO:0007669"/>
    <property type="project" value="UniProtKB-UniRule"/>
</dbReference>
<dbReference type="GO" id="GO:0008360">
    <property type="term" value="P:regulation of cell shape"/>
    <property type="evidence" value="ECO:0007669"/>
    <property type="project" value="UniProtKB-KW"/>
</dbReference>
<dbReference type="Gene3D" id="3.90.190.20">
    <property type="entry name" value="Mur ligase, C-terminal domain"/>
    <property type="match status" value="1"/>
</dbReference>
<dbReference type="Gene3D" id="3.40.1190.10">
    <property type="entry name" value="Mur-like, catalytic domain"/>
    <property type="match status" value="1"/>
</dbReference>
<dbReference type="Gene3D" id="3.40.50.720">
    <property type="entry name" value="NAD(P)-binding Rossmann-like Domain"/>
    <property type="match status" value="1"/>
</dbReference>
<dbReference type="HAMAP" id="MF_00046">
    <property type="entry name" value="MurC"/>
    <property type="match status" value="1"/>
</dbReference>
<dbReference type="InterPro" id="IPR036565">
    <property type="entry name" value="Mur-like_cat_sf"/>
</dbReference>
<dbReference type="InterPro" id="IPR004101">
    <property type="entry name" value="Mur_ligase_C"/>
</dbReference>
<dbReference type="InterPro" id="IPR036615">
    <property type="entry name" value="Mur_ligase_C_dom_sf"/>
</dbReference>
<dbReference type="InterPro" id="IPR013221">
    <property type="entry name" value="Mur_ligase_cen"/>
</dbReference>
<dbReference type="InterPro" id="IPR000713">
    <property type="entry name" value="Mur_ligase_N"/>
</dbReference>
<dbReference type="InterPro" id="IPR050061">
    <property type="entry name" value="MurCDEF_pg_biosynth"/>
</dbReference>
<dbReference type="InterPro" id="IPR005758">
    <property type="entry name" value="UDP-N-AcMur_Ala_ligase_MurC"/>
</dbReference>
<dbReference type="NCBIfam" id="TIGR01082">
    <property type="entry name" value="murC"/>
    <property type="match status" value="1"/>
</dbReference>
<dbReference type="PANTHER" id="PTHR43445:SF3">
    <property type="entry name" value="UDP-N-ACETYLMURAMATE--L-ALANINE LIGASE"/>
    <property type="match status" value="1"/>
</dbReference>
<dbReference type="PANTHER" id="PTHR43445">
    <property type="entry name" value="UDP-N-ACETYLMURAMATE--L-ALANINE LIGASE-RELATED"/>
    <property type="match status" value="1"/>
</dbReference>
<dbReference type="Pfam" id="PF01225">
    <property type="entry name" value="Mur_ligase"/>
    <property type="match status" value="1"/>
</dbReference>
<dbReference type="Pfam" id="PF02875">
    <property type="entry name" value="Mur_ligase_C"/>
    <property type="match status" value="1"/>
</dbReference>
<dbReference type="Pfam" id="PF08245">
    <property type="entry name" value="Mur_ligase_M"/>
    <property type="match status" value="1"/>
</dbReference>
<dbReference type="SUPFAM" id="SSF51984">
    <property type="entry name" value="MurCD N-terminal domain"/>
    <property type="match status" value="1"/>
</dbReference>
<dbReference type="SUPFAM" id="SSF53623">
    <property type="entry name" value="MurD-like peptide ligases, catalytic domain"/>
    <property type="match status" value="1"/>
</dbReference>
<dbReference type="SUPFAM" id="SSF53244">
    <property type="entry name" value="MurD-like peptide ligases, peptide-binding domain"/>
    <property type="match status" value="1"/>
</dbReference>
<name>MURC_CHLAD</name>
<evidence type="ECO:0000255" key="1">
    <source>
        <dbReference type="HAMAP-Rule" id="MF_00046"/>
    </source>
</evidence>
<feature type="chain" id="PRO_1000117400" description="UDP-N-acetylmuramate--L-alanine ligase">
    <location>
        <begin position="1"/>
        <end position="474"/>
    </location>
</feature>
<feature type="binding site" evidence="1">
    <location>
        <begin position="108"/>
        <end position="114"/>
    </location>
    <ligand>
        <name>ATP</name>
        <dbReference type="ChEBI" id="CHEBI:30616"/>
    </ligand>
</feature>
<sequence>MSHYHIVGIAGAGMSAIAHLLLDQGHTVSGSDLTTNRATEALAARGVRIWQGHDPAYVRGADAVLATAAIRGEHPELTAAAALGIPRLSRADLWREWSAQRPVIAVAGTHGKTTTSAMTALALRGGGVACGFLIGADVPALGGSAQWGDPTAPLVIEADEYDRVFLALTPAMAIVTNVEWDHPDIYPTATDYAAAFAEFAAQVRDRRRLLLCADDPGTAALDVDGQARWYGIDEQIACDPVSCRLAPLDWTASRVTVTAEGQQFDLWYYDRRTFARRFALMVTLAVPGIHNVRNATAALAAAALWGADLQAAGAALATYRGSSRRFEVYGEVAGVTVIDDYAHHPTEVQATIAAAQQRYPGRRVVVYVQPHTFSRTRSLWERWPEACRAAAIVSIGDVYPAREQGDPVALATELVAYLVAYGVVAHYGGGIATAAERLVALIQPGDVVLVLGAGDSNRVAAMVIAQLQRVQAEA</sequence>
<gene>
    <name evidence="1" type="primary">murC</name>
    <name type="ordered locus">Cagg_2854</name>
</gene>
<proteinExistence type="inferred from homology"/>
<keyword id="KW-0067">ATP-binding</keyword>
<keyword id="KW-0131">Cell cycle</keyword>
<keyword id="KW-0132">Cell division</keyword>
<keyword id="KW-0133">Cell shape</keyword>
<keyword id="KW-0961">Cell wall biogenesis/degradation</keyword>
<keyword id="KW-0963">Cytoplasm</keyword>
<keyword id="KW-0436">Ligase</keyword>
<keyword id="KW-0547">Nucleotide-binding</keyword>
<keyword id="KW-0573">Peptidoglycan synthesis</keyword>
<organism>
    <name type="scientific">Chloroflexus aggregans (strain MD-66 / DSM 9485)</name>
    <dbReference type="NCBI Taxonomy" id="326427"/>
    <lineage>
        <taxon>Bacteria</taxon>
        <taxon>Bacillati</taxon>
        <taxon>Chloroflexota</taxon>
        <taxon>Chloroflexia</taxon>
        <taxon>Chloroflexales</taxon>
        <taxon>Chloroflexineae</taxon>
        <taxon>Chloroflexaceae</taxon>
        <taxon>Chloroflexus</taxon>
    </lineage>
</organism>
<accession>B8G5Y3</accession>
<reference key="1">
    <citation type="submission" date="2008-12" db="EMBL/GenBank/DDBJ databases">
        <title>Complete sequence of Chloroflexus aggregans DSM 9485.</title>
        <authorList>
            <consortium name="US DOE Joint Genome Institute"/>
            <person name="Lucas S."/>
            <person name="Copeland A."/>
            <person name="Lapidus A."/>
            <person name="Glavina del Rio T."/>
            <person name="Dalin E."/>
            <person name="Tice H."/>
            <person name="Pitluck S."/>
            <person name="Foster B."/>
            <person name="Larimer F."/>
            <person name="Land M."/>
            <person name="Hauser L."/>
            <person name="Kyrpides N."/>
            <person name="Mikhailova N."/>
            <person name="Bryant D.A."/>
            <person name="Richardson P."/>
        </authorList>
    </citation>
    <scope>NUCLEOTIDE SEQUENCE [LARGE SCALE GENOMIC DNA]</scope>
    <source>
        <strain>MD-66 / DSM 9485</strain>
    </source>
</reference>
<comment type="function">
    <text evidence="1">Cell wall formation.</text>
</comment>
<comment type="catalytic activity">
    <reaction evidence="1">
        <text>UDP-N-acetyl-alpha-D-muramate + L-alanine + ATP = UDP-N-acetyl-alpha-D-muramoyl-L-alanine + ADP + phosphate + H(+)</text>
        <dbReference type="Rhea" id="RHEA:23372"/>
        <dbReference type="ChEBI" id="CHEBI:15378"/>
        <dbReference type="ChEBI" id="CHEBI:30616"/>
        <dbReference type="ChEBI" id="CHEBI:43474"/>
        <dbReference type="ChEBI" id="CHEBI:57972"/>
        <dbReference type="ChEBI" id="CHEBI:70757"/>
        <dbReference type="ChEBI" id="CHEBI:83898"/>
        <dbReference type="ChEBI" id="CHEBI:456216"/>
        <dbReference type="EC" id="6.3.2.8"/>
    </reaction>
</comment>
<comment type="pathway">
    <text evidence="1">Cell wall biogenesis; peptidoglycan biosynthesis.</text>
</comment>
<comment type="subcellular location">
    <subcellularLocation>
        <location evidence="1">Cytoplasm</location>
    </subcellularLocation>
</comment>
<comment type="similarity">
    <text evidence="1">Belongs to the MurCDEF family.</text>
</comment>
<protein>
    <recommendedName>
        <fullName evidence="1">UDP-N-acetylmuramate--L-alanine ligase</fullName>
        <ecNumber evidence="1">6.3.2.8</ecNumber>
    </recommendedName>
    <alternativeName>
        <fullName evidence="1">UDP-N-acetylmuramoyl-L-alanine synthetase</fullName>
    </alternativeName>
</protein>